<gene>
    <name type="primary">US3</name>
</gene>
<name>US03_PSHV1</name>
<accession>Q6UDG0</accession>
<reference key="1">
    <citation type="journal article" date="2006" name="J. Virol.">
        <title>Psittacid herpesvirus 1 and infectious laryngotracheitis virus: Comparative genome sequence analysis of two avian alphaherpesviruses.</title>
        <authorList>
            <person name="Thureen D.R."/>
            <person name="Keeler C.L. Jr."/>
        </authorList>
    </citation>
    <scope>NUCLEOTIDE SEQUENCE [LARGE SCALE GENOMIC DNA]</scope>
</reference>
<organismHost>
    <name type="scientific">Amazona oratrix</name>
    <name type="common">yellow-headed parrot</name>
    <dbReference type="NCBI Taxonomy" id="152276"/>
</organismHost>
<comment type="function">
    <text evidence="1">Multifunctional serine/threonine kinase that plays a role in several processes including egress of virus particles from the nucleus, modulation of the actin cytoskeleton and inhibition of apoptosis. Phosphorylates UL31 and UL34 homologs, two critical regulators of capsid budding from nucleus to endoplasmic reticulum, thereby facilitating virion egress. Modulates and redistributes host components of the nuclear envelope, including LMNA, emerin/EMD and the nuclear matrix protein MATR3. Phosphorylates envelope glycoprotein B (gB), probably to direct it to the cell surface. Promotes virus intracellular spread by restructuring host cell cytoskeleton. Blocks host apoptosis to extend cell survival and allow efficient viral replication. Promotes viral gene expression by phosphorylating host HDAC2 to reduce viral genome silencing (By similarity).</text>
</comment>
<comment type="catalytic activity">
    <reaction>
        <text>L-seryl-[protein] + ATP = O-phospho-L-seryl-[protein] + ADP + H(+)</text>
        <dbReference type="Rhea" id="RHEA:17989"/>
        <dbReference type="Rhea" id="RHEA-COMP:9863"/>
        <dbReference type="Rhea" id="RHEA-COMP:11604"/>
        <dbReference type="ChEBI" id="CHEBI:15378"/>
        <dbReference type="ChEBI" id="CHEBI:29999"/>
        <dbReference type="ChEBI" id="CHEBI:30616"/>
        <dbReference type="ChEBI" id="CHEBI:83421"/>
        <dbReference type="ChEBI" id="CHEBI:456216"/>
        <dbReference type="EC" id="2.7.11.1"/>
    </reaction>
</comment>
<comment type="catalytic activity">
    <reaction>
        <text>L-threonyl-[protein] + ATP = O-phospho-L-threonyl-[protein] + ADP + H(+)</text>
        <dbReference type="Rhea" id="RHEA:46608"/>
        <dbReference type="Rhea" id="RHEA-COMP:11060"/>
        <dbReference type="Rhea" id="RHEA-COMP:11605"/>
        <dbReference type="ChEBI" id="CHEBI:15378"/>
        <dbReference type="ChEBI" id="CHEBI:30013"/>
        <dbReference type="ChEBI" id="CHEBI:30616"/>
        <dbReference type="ChEBI" id="CHEBI:61977"/>
        <dbReference type="ChEBI" id="CHEBI:456216"/>
        <dbReference type="EC" id="2.7.11.1"/>
    </reaction>
</comment>
<comment type="subcellular location">
    <subcellularLocation>
        <location evidence="1">Host cytoplasm</location>
    </subcellularLocation>
    <subcellularLocation>
        <location evidence="1">Host nucleus</location>
    </subcellularLocation>
</comment>
<comment type="PTM">
    <text evidence="1">Phosphorylated by UL13 homolog; this phosphorylation regulates subsequent phosphorylation of UL31 and UL34 homologs by US3. Autophosphorylated (By similarity).</text>
</comment>
<comment type="similarity">
    <text evidence="2">Belongs to the protein kinase superfamily. Ser/Thr protein kinase family.</text>
</comment>
<protein>
    <recommendedName>
        <fullName>Protein kinase US3 homolog</fullName>
        <ecNumber>2.7.11.1</ecNumber>
    </recommendedName>
</protein>
<sequence>MTRKRFLCPSVCRSRAARTGESKRRRLHSHDRRRCAITPDFDEDGRMAHIANPRPNPLECAEASQKVIMAPSRSDTTGAHRCLEDAAPVGELLVPRSSADLHESQRGQPSGATDSQASTLETESAPPSADSSSSAKLQRDDEFLAKYRVIGTLPAGSFGKILVCALRASVGEAEASRVPRSERRVAKRVRATSRLAIYLENEILALQYMNHENILKVEEVLRSEAYTYMITRKYDYDLYSFMYDGDLQWKDRPLLWQTRAIMKQLLCAVEYMHDKLLMHRDIKLENVFLNGDGTIVLGDLGTAMTFEKPRVARDYGWVGTVTTNSPEMLAGDGYCEITDLWSCGLIMLDMLSKDLLPLNGNTKKPGKQLRRIIRSLSVCDEEFPDPPCKLFDYIDSAEYTHTPMSVPPLIRRMGLPADFEYPLVKMLTFDWHRRPGASELLALPLFSSTITEERLFVWGLKSGAAHFSSWKPACRIESDTAALSLTMSDDDE</sequence>
<evidence type="ECO:0000250" key="1"/>
<evidence type="ECO:0000255" key="2">
    <source>
        <dbReference type="PROSITE-ProRule" id="PRU00159"/>
    </source>
</evidence>
<evidence type="ECO:0000255" key="3">
    <source>
        <dbReference type="PROSITE-ProRule" id="PRU10027"/>
    </source>
</evidence>
<evidence type="ECO:0000256" key="4">
    <source>
        <dbReference type="SAM" id="MobiDB-lite"/>
    </source>
</evidence>
<proteinExistence type="inferred from homology"/>
<organism>
    <name type="scientific">Psittacid herpesvirus 1 (isolate Amazon parrot/-/97-0001/1997)</name>
    <name type="common">PsHV-1</name>
    <name type="synonym">Pacheco's disease virus</name>
    <dbReference type="NCBI Taxonomy" id="670426"/>
    <lineage>
        <taxon>Viruses</taxon>
        <taxon>Duplodnaviria</taxon>
        <taxon>Heunggongvirae</taxon>
        <taxon>Peploviricota</taxon>
        <taxon>Herviviricetes</taxon>
        <taxon>Herpesvirales</taxon>
        <taxon>Orthoherpesviridae</taxon>
        <taxon>Alphaherpesvirinae</taxon>
        <taxon>Iltovirus</taxon>
        <taxon>Iltovirus psittacidalpha1</taxon>
        <taxon>Psittacid alphaherpesvirus 1</taxon>
    </lineage>
</organism>
<keyword id="KW-0067">ATP-binding</keyword>
<keyword id="KW-1035">Host cytoplasm</keyword>
<keyword id="KW-1048">Host nucleus</keyword>
<keyword id="KW-0945">Host-virus interaction</keyword>
<keyword id="KW-0418">Kinase</keyword>
<keyword id="KW-1119">Modulation of host cell apoptosis by virus</keyword>
<keyword id="KW-1122">Modulation of host chromatin by virus</keyword>
<keyword id="KW-0547">Nucleotide-binding</keyword>
<keyword id="KW-1185">Reference proteome</keyword>
<keyword id="KW-0723">Serine/threonine-protein kinase</keyword>
<keyword id="KW-0808">Transferase</keyword>
<dbReference type="EC" id="2.7.11.1"/>
<dbReference type="EMBL" id="AY372243">
    <property type="protein sequence ID" value="AAQ73750.1"/>
    <property type="molecule type" value="Genomic_DNA"/>
</dbReference>
<dbReference type="RefSeq" id="NP_944444.1">
    <property type="nucleotide sequence ID" value="NC_005264.1"/>
</dbReference>
<dbReference type="SMR" id="Q6UDG0"/>
<dbReference type="GeneID" id="2656972"/>
<dbReference type="KEGG" id="vg:2656972"/>
<dbReference type="Proteomes" id="UP000006840">
    <property type="component" value="Segment"/>
</dbReference>
<dbReference type="GO" id="GO:0030430">
    <property type="term" value="C:host cell cytoplasm"/>
    <property type="evidence" value="ECO:0007669"/>
    <property type="project" value="UniProtKB-SubCell"/>
</dbReference>
<dbReference type="GO" id="GO:0042025">
    <property type="term" value="C:host cell nucleus"/>
    <property type="evidence" value="ECO:0007669"/>
    <property type="project" value="UniProtKB-SubCell"/>
</dbReference>
<dbReference type="GO" id="GO:0005524">
    <property type="term" value="F:ATP binding"/>
    <property type="evidence" value="ECO:0007669"/>
    <property type="project" value="UniProtKB-KW"/>
</dbReference>
<dbReference type="GO" id="GO:0106310">
    <property type="term" value="F:protein serine kinase activity"/>
    <property type="evidence" value="ECO:0007669"/>
    <property type="project" value="RHEA"/>
</dbReference>
<dbReference type="GO" id="GO:0004674">
    <property type="term" value="F:protein serine/threonine kinase activity"/>
    <property type="evidence" value="ECO:0007669"/>
    <property type="project" value="UniProtKB-KW"/>
</dbReference>
<dbReference type="GO" id="GO:0052150">
    <property type="term" value="P:symbiont-mediated perturbation of host apoptosis"/>
    <property type="evidence" value="ECO:0007669"/>
    <property type="project" value="UniProtKB-KW"/>
</dbReference>
<dbReference type="GO" id="GO:0039525">
    <property type="term" value="P:symbiont-mediated perturbation of host chromatin organization"/>
    <property type="evidence" value="ECO:0007669"/>
    <property type="project" value="UniProtKB-KW"/>
</dbReference>
<dbReference type="Gene3D" id="3.30.200.20">
    <property type="entry name" value="Phosphorylase Kinase, domain 1"/>
    <property type="match status" value="1"/>
</dbReference>
<dbReference type="Gene3D" id="1.10.510.10">
    <property type="entry name" value="Transferase(Phosphotransferase) domain 1"/>
    <property type="match status" value="1"/>
</dbReference>
<dbReference type="InterPro" id="IPR011009">
    <property type="entry name" value="Kinase-like_dom_sf"/>
</dbReference>
<dbReference type="InterPro" id="IPR000719">
    <property type="entry name" value="Prot_kinase_dom"/>
</dbReference>
<dbReference type="InterPro" id="IPR008271">
    <property type="entry name" value="Ser/Thr_kinase_AS"/>
</dbReference>
<dbReference type="PANTHER" id="PTHR44167">
    <property type="entry name" value="OVARIAN-SPECIFIC SERINE/THREONINE-PROTEIN KINASE LOK-RELATED"/>
    <property type="match status" value="1"/>
</dbReference>
<dbReference type="PANTHER" id="PTHR44167:SF24">
    <property type="entry name" value="SERINE_THREONINE-PROTEIN KINASE CHK2"/>
    <property type="match status" value="1"/>
</dbReference>
<dbReference type="Pfam" id="PF00069">
    <property type="entry name" value="Pkinase"/>
    <property type="match status" value="1"/>
</dbReference>
<dbReference type="SMART" id="SM00220">
    <property type="entry name" value="S_TKc"/>
    <property type="match status" value="1"/>
</dbReference>
<dbReference type="SUPFAM" id="SSF56112">
    <property type="entry name" value="Protein kinase-like (PK-like)"/>
    <property type="match status" value="1"/>
</dbReference>
<dbReference type="PROSITE" id="PS50011">
    <property type="entry name" value="PROTEIN_KINASE_DOM"/>
    <property type="match status" value="1"/>
</dbReference>
<dbReference type="PROSITE" id="PS00108">
    <property type="entry name" value="PROTEIN_KINASE_ST"/>
    <property type="match status" value="1"/>
</dbReference>
<feature type="chain" id="PRO_0000406801" description="Protein kinase US3 homolog">
    <location>
        <begin position="1"/>
        <end position="492"/>
    </location>
</feature>
<feature type="domain" description="Protein kinase" evidence="2">
    <location>
        <begin position="147"/>
        <end position="446"/>
    </location>
</feature>
<feature type="region of interest" description="Disordered" evidence="4">
    <location>
        <begin position="99"/>
        <end position="137"/>
    </location>
</feature>
<feature type="compositionally biased region" description="Polar residues" evidence="4">
    <location>
        <begin position="106"/>
        <end position="122"/>
    </location>
</feature>
<feature type="compositionally biased region" description="Low complexity" evidence="4">
    <location>
        <begin position="124"/>
        <end position="135"/>
    </location>
</feature>
<feature type="active site" description="Proton acceptor" evidence="2 3">
    <location>
        <position position="281"/>
    </location>
</feature>
<feature type="binding site" evidence="2">
    <location>
        <begin position="153"/>
        <end position="161"/>
    </location>
    <ligand>
        <name>ATP</name>
        <dbReference type="ChEBI" id="CHEBI:30616"/>
    </ligand>
</feature>
<feature type="binding site" evidence="2">
    <location>
        <position position="187"/>
    </location>
    <ligand>
        <name>ATP</name>
        <dbReference type="ChEBI" id="CHEBI:30616"/>
    </ligand>
</feature>